<evidence type="ECO:0000255" key="1">
    <source>
        <dbReference type="HAMAP-Rule" id="MF_00016"/>
    </source>
</evidence>
<sequence length="356" mass="39532">MIETDKLATEQRIIAATPASSHEEVFERALRPRQLDDYVGQEKVRGQLEIFIEAAKRRSEPLDHVLLFGPPGLGKTTLAHIIAREMGVNLRQTSGPVLERAGDLAALLTNLEANDVLFIDEIHRLSPVVEEILYPALEDYQIDIMIGEGPAARSVKLDLQPFTLVGATTRAGMLTNPLRDRFGIVARLEFYDAEQLSRIVRRSASLLNAQIDPNGALEIAKRARGTPRIANRLLRRVRDFAEVKADGQITAAVADAALAMLDVDPVGFDLMDRKLLEAILYKFDGGPVGIDNLAAAIGEERDTIEDVLEPYLIQQGFLQRTPRGRVATLLTYRHFGLSVPDARRTERDEWDTPDGK</sequence>
<protein>
    <recommendedName>
        <fullName evidence="1">Holliday junction branch migration complex subunit RuvB</fullName>
        <ecNumber evidence="1">3.6.4.-</ecNumber>
    </recommendedName>
</protein>
<accession>A0K4L4</accession>
<gene>
    <name evidence="1" type="primary">ruvB</name>
    <name type="ordered locus">Bcen2424_0688</name>
</gene>
<name>RUVB_BURCH</name>
<dbReference type="EC" id="3.6.4.-" evidence="1"/>
<dbReference type="EMBL" id="CP000458">
    <property type="protein sequence ID" value="ABK07441.1"/>
    <property type="molecule type" value="Genomic_DNA"/>
</dbReference>
<dbReference type="RefSeq" id="WP_006476896.1">
    <property type="nucleotide sequence ID" value="NC_008542.1"/>
</dbReference>
<dbReference type="SMR" id="A0K4L4"/>
<dbReference type="GeneID" id="83047455"/>
<dbReference type="KEGG" id="bch:Bcen2424_0688"/>
<dbReference type="HOGENOM" id="CLU_055599_1_0_4"/>
<dbReference type="GO" id="GO:0005737">
    <property type="term" value="C:cytoplasm"/>
    <property type="evidence" value="ECO:0007669"/>
    <property type="project" value="UniProtKB-SubCell"/>
</dbReference>
<dbReference type="GO" id="GO:0048476">
    <property type="term" value="C:Holliday junction resolvase complex"/>
    <property type="evidence" value="ECO:0007669"/>
    <property type="project" value="UniProtKB-UniRule"/>
</dbReference>
<dbReference type="GO" id="GO:0005524">
    <property type="term" value="F:ATP binding"/>
    <property type="evidence" value="ECO:0007669"/>
    <property type="project" value="UniProtKB-UniRule"/>
</dbReference>
<dbReference type="GO" id="GO:0016887">
    <property type="term" value="F:ATP hydrolysis activity"/>
    <property type="evidence" value="ECO:0007669"/>
    <property type="project" value="InterPro"/>
</dbReference>
<dbReference type="GO" id="GO:0000400">
    <property type="term" value="F:four-way junction DNA binding"/>
    <property type="evidence" value="ECO:0007669"/>
    <property type="project" value="UniProtKB-UniRule"/>
</dbReference>
<dbReference type="GO" id="GO:0009378">
    <property type="term" value="F:four-way junction helicase activity"/>
    <property type="evidence" value="ECO:0007669"/>
    <property type="project" value="InterPro"/>
</dbReference>
<dbReference type="GO" id="GO:0006310">
    <property type="term" value="P:DNA recombination"/>
    <property type="evidence" value="ECO:0007669"/>
    <property type="project" value="UniProtKB-UniRule"/>
</dbReference>
<dbReference type="GO" id="GO:0006281">
    <property type="term" value="P:DNA repair"/>
    <property type="evidence" value="ECO:0007669"/>
    <property type="project" value="UniProtKB-UniRule"/>
</dbReference>
<dbReference type="CDD" id="cd00009">
    <property type="entry name" value="AAA"/>
    <property type="match status" value="1"/>
</dbReference>
<dbReference type="FunFam" id="1.10.10.10:FF:000086">
    <property type="entry name" value="Holliday junction ATP-dependent DNA helicase RuvB"/>
    <property type="match status" value="1"/>
</dbReference>
<dbReference type="FunFam" id="1.10.8.60:FF:000023">
    <property type="entry name" value="Holliday junction ATP-dependent DNA helicase RuvB"/>
    <property type="match status" value="1"/>
</dbReference>
<dbReference type="FunFam" id="3.40.50.300:FF:000073">
    <property type="entry name" value="Holliday junction ATP-dependent DNA helicase RuvB"/>
    <property type="match status" value="1"/>
</dbReference>
<dbReference type="Gene3D" id="1.10.8.60">
    <property type="match status" value="1"/>
</dbReference>
<dbReference type="Gene3D" id="3.40.50.300">
    <property type="entry name" value="P-loop containing nucleotide triphosphate hydrolases"/>
    <property type="match status" value="1"/>
</dbReference>
<dbReference type="Gene3D" id="1.10.10.10">
    <property type="entry name" value="Winged helix-like DNA-binding domain superfamily/Winged helix DNA-binding domain"/>
    <property type="match status" value="1"/>
</dbReference>
<dbReference type="HAMAP" id="MF_00016">
    <property type="entry name" value="DNA_HJ_migration_RuvB"/>
    <property type="match status" value="1"/>
</dbReference>
<dbReference type="InterPro" id="IPR003593">
    <property type="entry name" value="AAA+_ATPase"/>
</dbReference>
<dbReference type="InterPro" id="IPR041445">
    <property type="entry name" value="AAA_lid_4"/>
</dbReference>
<dbReference type="InterPro" id="IPR004605">
    <property type="entry name" value="DNA_helicase_Holl-junc_RuvB"/>
</dbReference>
<dbReference type="InterPro" id="IPR027417">
    <property type="entry name" value="P-loop_NTPase"/>
</dbReference>
<dbReference type="InterPro" id="IPR008824">
    <property type="entry name" value="RuvB-like_N"/>
</dbReference>
<dbReference type="InterPro" id="IPR008823">
    <property type="entry name" value="RuvB_C"/>
</dbReference>
<dbReference type="InterPro" id="IPR036388">
    <property type="entry name" value="WH-like_DNA-bd_sf"/>
</dbReference>
<dbReference type="InterPro" id="IPR036390">
    <property type="entry name" value="WH_DNA-bd_sf"/>
</dbReference>
<dbReference type="NCBIfam" id="NF000868">
    <property type="entry name" value="PRK00080.1"/>
    <property type="match status" value="1"/>
</dbReference>
<dbReference type="NCBIfam" id="TIGR00635">
    <property type="entry name" value="ruvB"/>
    <property type="match status" value="1"/>
</dbReference>
<dbReference type="PANTHER" id="PTHR42848">
    <property type="match status" value="1"/>
</dbReference>
<dbReference type="PANTHER" id="PTHR42848:SF1">
    <property type="entry name" value="HOLLIDAY JUNCTION BRANCH MIGRATION COMPLEX SUBUNIT RUVB"/>
    <property type="match status" value="1"/>
</dbReference>
<dbReference type="Pfam" id="PF17864">
    <property type="entry name" value="AAA_lid_4"/>
    <property type="match status" value="1"/>
</dbReference>
<dbReference type="Pfam" id="PF05491">
    <property type="entry name" value="RuvB_C"/>
    <property type="match status" value="1"/>
</dbReference>
<dbReference type="Pfam" id="PF05496">
    <property type="entry name" value="RuvB_N"/>
    <property type="match status" value="1"/>
</dbReference>
<dbReference type="SMART" id="SM00382">
    <property type="entry name" value="AAA"/>
    <property type="match status" value="1"/>
</dbReference>
<dbReference type="SUPFAM" id="SSF52540">
    <property type="entry name" value="P-loop containing nucleoside triphosphate hydrolases"/>
    <property type="match status" value="1"/>
</dbReference>
<dbReference type="SUPFAM" id="SSF46785">
    <property type="entry name" value="Winged helix' DNA-binding domain"/>
    <property type="match status" value="1"/>
</dbReference>
<keyword id="KW-0067">ATP-binding</keyword>
<keyword id="KW-0963">Cytoplasm</keyword>
<keyword id="KW-0227">DNA damage</keyword>
<keyword id="KW-0233">DNA recombination</keyword>
<keyword id="KW-0234">DNA repair</keyword>
<keyword id="KW-0238">DNA-binding</keyword>
<keyword id="KW-0378">Hydrolase</keyword>
<keyword id="KW-0547">Nucleotide-binding</keyword>
<proteinExistence type="inferred from homology"/>
<reference key="1">
    <citation type="submission" date="2006-08" db="EMBL/GenBank/DDBJ databases">
        <title>Complete sequence of chromosome 1 of Burkholderia cenocepacia HI2424.</title>
        <authorList>
            <person name="Copeland A."/>
            <person name="Lucas S."/>
            <person name="Lapidus A."/>
            <person name="Barry K."/>
            <person name="Detter J.C."/>
            <person name="Glavina del Rio T."/>
            <person name="Hammon N."/>
            <person name="Israni S."/>
            <person name="Pitluck S."/>
            <person name="Chain P."/>
            <person name="Malfatti S."/>
            <person name="Shin M."/>
            <person name="Vergez L."/>
            <person name="Schmutz J."/>
            <person name="Larimer F."/>
            <person name="Land M."/>
            <person name="Hauser L."/>
            <person name="Kyrpides N."/>
            <person name="Kim E."/>
            <person name="LiPuma J.J."/>
            <person name="Gonzalez C.F."/>
            <person name="Konstantinidis K."/>
            <person name="Tiedje J.M."/>
            <person name="Richardson P."/>
        </authorList>
    </citation>
    <scope>NUCLEOTIDE SEQUENCE [LARGE SCALE GENOMIC DNA]</scope>
    <source>
        <strain>HI2424</strain>
    </source>
</reference>
<comment type="function">
    <text evidence="1">The RuvA-RuvB-RuvC complex processes Holliday junction (HJ) DNA during genetic recombination and DNA repair, while the RuvA-RuvB complex plays an important role in the rescue of blocked DNA replication forks via replication fork reversal (RFR). RuvA specifically binds to HJ cruciform DNA, conferring on it an open structure. The RuvB hexamer acts as an ATP-dependent pump, pulling dsDNA into and through the RuvAB complex. RuvB forms 2 homohexamers on either side of HJ DNA bound by 1 or 2 RuvA tetramers; 4 subunits per hexamer contact DNA at a time. Coordinated motions by a converter formed by DNA-disengaged RuvB subunits stimulates ATP hydrolysis and nucleotide exchange. Immobilization of the converter enables RuvB to convert the ATP-contained energy into a lever motion, pulling 2 nucleotides of DNA out of the RuvA tetramer per ATP hydrolyzed, thus driving DNA branch migration. The RuvB motors rotate together with the DNA substrate, which together with the progressing nucleotide cycle form the mechanistic basis for DNA recombination by continuous HJ branch migration. Branch migration allows RuvC to scan DNA until it finds its consensus sequence, where it cleaves and resolves cruciform DNA.</text>
</comment>
<comment type="catalytic activity">
    <reaction evidence="1">
        <text>ATP + H2O = ADP + phosphate + H(+)</text>
        <dbReference type="Rhea" id="RHEA:13065"/>
        <dbReference type="ChEBI" id="CHEBI:15377"/>
        <dbReference type="ChEBI" id="CHEBI:15378"/>
        <dbReference type="ChEBI" id="CHEBI:30616"/>
        <dbReference type="ChEBI" id="CHEBI:43474"/>
        <dbReference type="ChEBI" id="CHEBI:456216"/>
    </reaction>
</comment>
<comment type="subunit">
    <text evidence="1">Homohexamer. Forms an RuvA(8)-RuvB(12)-Holliday junction (HJ) complex. HJ DNA is sandwiched between 2 RuvA tetramers; dsDNA enters through RuvA and exits via RuvB. An RuvB hexamer assembles on each DNA strand where it exits the tetramer. Each RuvB hexamer is contacted by two RuvA subunits (via domain III) on 2 adjacent RuvB subunits; this complex drives branch migration. In the full resolvosome a probable DNA-RuvA(4)-RuvB(12)-RuvC(2) complex forms which resolves the HJ.</text>
</comment>
<comment type="subcellular location">
    <subcellularLocation>
        <location evidence="1">Cytoplasm</location>
    </subcellularLocation>
</comment>
<comment type="domain">
    <text evidence="1">Has 3 domains, the large (RuvB-L) and small ATPase (RuvB-S) domains and the C-terminal head (RuvB-H) domain. The head domain binds DNA, while the ATPase domains jointly bind ATP, ADP or are empty depending on the state of the subunit in the translocation cycle. During a single DNA translocation step the structure of each domain remains the same, but their relative positions change.</text>
</comment>
<comment type="similarity">
    <text evidence="1">Belongs to the RuvB family.</text>
</comment>
<feature type="chain" id="PRO_1000001369" description="Holliday junction branch migration complex subunit RuvB">
    <location>
        <begin position="1"/>
        <end position="356"/>
    </location>
</feature>
<feature type="region of interest" description="Large ATPase domain (RuvB-L)" evidence="1">
    <location>
        <begin position="4"/>
        <end position="191"/>
    </location>
</feature>
<feature type="region of interest" description="Small ATPAse domain (RuvB-S)" evidence="1">
    <location>
        <begin position="192"/>
        <end position="262"/>
    </location>
</feature>
<feature type="region of interest" description="Head domain (RuvB-H)" evidence="1">
    <location>
        <begin position="265"/>
        <end position="356"/>
    </location>
</feature>
<feature type="binding site" evidence="1">
    <location>
        <position position="30"/>
    </location>
    <ligand>
        <name>ATP</name>
        <dbReference type="ChEBI" id="CHEBI:30616"/>
    </ligand>
</feature>
<feature type="binding site" evidence="1">
    <location>
        <position position="31"/>
    </location>
    <ligand>
        <name>ATP</name>
        <dbReference type="ChEBI" id="CHEBI:30616"/>
    </ligand>
</feature>
<feature type="binding site" evidence="1">
    <location>
        <position position="72"/>
    </location>
    <ligand>
        <name>ATP</name>
        <dbReference type="ChEBI" id="CHEBI:30616"/>
    </ligand>
</feature>
<feature type="binding site" evidence="1">
    <location>
        <position position="75"/>
    </location>
    <ligand>
        <name>ATP</name>
        <dbReference type="ChEBI" id="CHEBI:30616"/>
    </ligand>
</feature>
<feature type="binding site" evidence="1">
    <location>
        <position position="76"/>
    </location>
    <ligand>
        <name>ATP</name>
        <dbReference type="ChEBI" id="CHEBI:30616"/>
    </ligand>
</feature>
<feature type="binding site" evidence="1">
    <location>
        <position position="76"/>
    </location>
    <ligand>
        <name>Mg(2+)</name>
        <dbReference type="ChEBI" id="CHEBI:18420"/>
    </ligand>
</feature>
<feature type="binding site" evidence="1">
    <location>
        <position position="77"/>
    </location>
    <ligand>
        <name>ATP</name>
        <dbReference type="ChEBI" id="CHEBI:30616"/>
    </ligand>
</feature>
<feature type="binding site" evidence="1">
    <location>
        <begin position="138"/>
        <end position="140"/>
    </location>
    <ligand>
        <name>ATP</name>
        <dbReference type="ChEBI" id="CHEBI:30616"/>
    </ligand>
</feature>
<feature type="binding site" evidence="1">
    <location>
        <position position="181"/>
    </location>
    <ligand>
        <name>ATP</name>
        <dbReference type="ChEBI" id="CHEBI:30616"/>
    </ligand>
</feature>
<feature type="binding site" evidence="1">
    <location>
        <position position="191"/>
    </location>
    <ligand>
        <name>ATP</name>
        <dbReference type="ChEBI" id="CHEBI:30616"/>
    </ligand>
</feature>
<feature type="binding site" evidence="1">
    <location>
        <position position="228"/>
    </location>
    <ligand>
        <name>ATP</name>
        <dbReference type="ChEBI" id="CHEBI:30616"/>
    </ligand>
</feature>
<feature type="binding site" evidence="1">
    <location>
        <position position="301"/>
    </location>
    <ligand>
        <name>DNA</name>
        <dbReference type="ChEBI" id="CHEBI:16991"/>
    </ligand>
</feature>
<feature type="binding site" evidence="1">
    <location>
        <position position="320"/>
    </location>
    <ligand>
        <name>DNA</name>
        <dbReference type="ChEBI" id="CHEBI:16991"/>
    </ligand>
</feature>
<feature type="binding site" evidence="1">
    <location>
        <position position="325"/>
    </location>
    <ligand>
        <name>DNA</name>
        <dbReference type="ChEBI" id="CHEBI:16991"/>
    </ligand>
</feature>
<organism>
    <name type="scientific">Burkholderia cenocepacia (strain HI2424)</name>
    <dbReference type="NCBI Taxonomy" id="331272"/>
    <lineage>
        <taxon>Bacteria</taxon>
        <taxon>Pseudomonadati</taxon>
        <taxon>Pseudomonadota</taxon>
        <taxon>Betaproteobacteria</taxon>
        <taxon>Burkholderiales</taxon>
        <taxon>Burkholderiaceae</taxon>
        <taxon>Burkholderia</taxon>
        <taxon>Burkholderia cepacia complex</taxon>
    </lineage>
</organism>